<reference key="1">
    <citation type="journal article" date="2006" name="Proc. Natl. Acad. Sci. U.S.A.">
        <title>The partitioned Rhizobium etli genome: genetic and metabolic redundancy in seven interacting replicons.</title>
        <authorList>
            <person name="Gonzalez V."/>
            <person name="Santamaria R.I."/>
            <person name="Bustos P."/>
            <person name="Hernandez-Gonzalez I."/>
            <person name="Medrano-Soto A."/>
            <person name="Moreno-Hagelsieb G."/>
            <person name="Janga S.C."/>
            <person name="Ramirez M.A."/>
            <person name="Jimenez-Jacinto V."/>
            <person name="Collado-Vides J."/>
            <person name="Davila G."/>
        </authorList>
    </citation>
    <scope>NUCLEOTIDE SEQUENCE [LARGE SCALE GENOMIC DNA]</scope>
    <source>
        <strain>ATCC 51251 / DSM 11541 / JCM 21823 / NBRC 15573 / CFN 42</strain>
    </source>
</reference>
<protein>
    <recommendedName>
        <fullName evidence="1">Transcriptional repressor NrdR</fullName>
    </recommendedName>
</protein>
<evidence type="ECO:0000255" key="1">
    <source>
        <dbReference type="HAMAP-Rule" id="MF_00440"/>
    </source>
</evidence>
<evidence type="ECO:0000256" key="2">
    <source>
        <dbReference type="SAM" id="MobiDB-lite"/>
    </source>
</evidence>
<feature type="chain" id="PRO_0000264199" description="Transcriptional repressor NrdR">
    <location>
        <begin position="1"/>
        <end position="158"/>
    </location>
</feature>
<feature type="domain" description="ATP-cone" evidence="1">
    <location>
        <begin position="49"/>
        <end position="139"/>
    </location>
</feature>
<feature type="zinc finger region" evidence="1">
    <location>
        <begin position="3"/>
        <end position="34"/>
    </location>
</feature>
<feature type="region of interest" description="Disordered" evidence="2">
    <location>
        <begin position="1"/>
        <end position="22"/>
    </location>
</feature>
<feature type="compositionally biased region" description="Basic and acidic residues" evidence="2">
    <location>
        <begin position="11"/>
        <end position="22"/>
    </location>
</feature>
<proteinExistence type="inferred from homology"/>
<sequence length="158" mass="18261">MRCPYCGSEDTQVKDSRPAEDNTSIRRRRICPDCGGRFTTFERVQLRELMVIKKTGRKVPFDRDKLVRSFEVALRKRPVERDRIERAVSGIVRRLESSGETEISSEQIGLQVLEAMKSLDDVGFVRYASVYRDFSLAEDFEKVISEINAKIARDPLDR</sequence>
<keyword id="KW-0067">ATP-binding</keyword>
<keyword id="KW-0238">DNA-binding</keyword>
<keyword id="KW-0479">Metal-binding</keyword>
<keyword id="KW-0547">Nucleotide-binding</keyword>
<keyword id="KW-1185">Reference proteome</keyword>
<keyword id="KW-0678">Repressor</keyword>
<keyword id="KW-0804">Transcription</keyword>
<keyword id="KW-0805">Transcription regulation</keyword>
<keyword id="KW-0862">Zinc</keyword>
<keyword id="KW-0863">Zinc-finger</keyword>
<comment type="function">
    <text evidence="1">Negatively regulates transcription of bacterial ribonucleotide reductase nrd genes and operons by binding to NrdR-boxes.</text>
</comment>
<comment type="cofactor">
    <cofactor evidence="1">
        <name>Zn(2+)</name>
        <dbReference type="ChEBI" id="CHEBI:29105"/>
    </cofactor>
    <text evidence="1">Binds 1 zinc ion.</text>
</comment>
<comment type="similarity">
    <text evidence="1">Belongs to the NrdR family.</text>
</comment>
<dbReference type="EMBL" id="CP000133">
    <property type="protein sequence ID" value="ABC90312.1"/>
    <property type="molecule type" value="Genomic_DNA"/>
</dbReference>
<dbReference type="RefSeq" id="WP_003547190.1">
    <property type="nucleotide sequence ID" value="NC_007761.1"/>
</dbReference>
<dbReference type="SMR" id="Q2KA24"/>
<dbReference type="GeneID" id="91147965"/>
<dbReference type="KEGG" id="ret:RHE_CH01509"/>
<dbReference type="eggNOG" id="COG1327">
    <property type="taxonomic scope" value="Bacteria"/>
</dbReference>
<dbReference type="HOGENOM" id="CLU_108412_0_1_5"/>
<dbReference type="OrthoDB" id="9807461at2"/>
<dbReference type="Proteomes" id="UP000001936">
    <property type="component" value="Chromosome"/>
</dbReference>
<dbReference type="GO" id="GO:0005524">
    <property type="term" value="F:ATP binding"/>
    <property type="evidence" value="ECO:0007669"/>
    <property type="project" value="UniProtKB-KW"/>
</dbReference>
<dbReference type="GO" id="GO:0003677">
    <property type="term" value="F:DNA binding"/>
    <property type="evidence" value="ECO:0007669"/>
    <property type="project" value="UniProtKB-KW"/>
</dbReference>
<dbReference type="GO" id="GO:0008270">
    <property type="term" value="F:zinc ion binding"/>
    <property type="evidence" value="ECO:0007669"/>
    <property type="project" value="UniProtKB-UniRule"/>
</dbReference>
<dbReference type="GO" id="GO:0045892">
    <property type="term" value="P:negative regulation of DNA-templated transcription"/>
    <property type="evidence" value="ECO:0007669"/>
    <property type="project" value="UniProtKB-UniRule"/>
</dbReference>
<dbReference type="HAMAP" id="MF_00440">
    <property type="entry name" value="NrdR"/>
    <property type="match status" value="1"/>
</dbReference>
<dbReference type="InterPro" id="IPR005144">
    <property type="entry name" value="ATP-cone_dom"/>
</dbReference>
<dbReference type="InterPro" id="IPR055173">
    <property type="entry name" value="NrdR-like_N"/>
</dbReference>
<dbReference type="InterPro" id="IPR003796">
    <property type="entry name" value="RNR_NrdR-like"/>
</dbReference>
<dbReference type="NCBIfam" id="TIGR00244">
    <property type="entry name" value="transcriptional regulator NrdR"/>
    <property type="match status" value="1"/>
</dbReference>
<dbReference type="PANTHER" id="PTHR30455">
    <property type="entry name" value="TRANSCRIPTIONAL REPRESSOR NRDR"/>
    <property type="match status" value="1"/>
</dbReference>
<dbReference type="PANTHER" id="PTHR30455:SF2">
    <property type="entry name" value="TRANSCRIPTIONAL REPRESSOR NRDR"/>
    <property type="match status" value="1"/>
</dbReference>
<dbReference type="Pfam" id="PF03477">
    <property type="entry name" value="ATP-cone"/>
    <property type="match status" value="1"/>
</dbReference>
<dbReference type="Pfam" id="PF22811">
    <property type="entry name" value="Zn_ribbon_NrdR"/>
    <property type="match status" value="1"/>
</dbReference>
<dbReference type="PROSITE" id="PS51161">
    <property type="entry name" value="ATP_CONE"/>
    <property type="match status" value="1"/>
</dbReference>
<organism>
    <name type="scientific">Rhizobium etli (strain ATCC 51251 / DSM 11541 / JCM 21823 / NBRC 15573 / CFN 42)</name>
    <dbReference type="NCBI Taxonomy" id="347834"/>
    <lineage>
        <taxon>Bacteria</taxon>
        <taxon>Pseudomonadati</taxon>
        <taxon>Pseudomonadota</taxon>
        <taxon>Alphaproteobacteria</taxon>
        <taxon>Hyphomicrobiales</taxon>
        <taxon>Rhizobiaceae</taxon>
        <taxon>Rhizobium/Agrobacterium group</taxon>
        <taxon>Rhizobium</taxon>
    </lineage>
</organism>
<accession>Q2KA24</accession>
<name>NRDR_RHIEC</name>
<gene>
    <name evidence="1" type="primary">nrdR</name>
    <name type="ordered locus">RHE_CH01509</name>
</gene>